<protein>
    <recommendedName>
        <fullName evidence="2">Small ribosomal subunit protein uS12</fullName>
    </recommendedName>
    <alternativeName>
        <fullName evidence="3">30S ribosomal protein S12</fullName>
    </alternativeName>
</protein>
<accession>Q5FFE9</accession>
<keyword id="KW-0488">Methylation</keyword>
<keyword id="KW-0687">Ribonucleoprotein</keyword>
<keyword id="KW-0689">Ribosomal protein</keyword>
<keyword id="KW-0694">RNA-binding</keyword>
<keyword id="KW-0699">rRNA-binding</keyword>
<keyword id="KW-0820">tRNA-binding</keyword>
<evidence type="ECO:0000250" key="1"/>
<evidence type="ECO:0000255" key="2">
    <source>
        <dbReference type="HAMAP-Rule" id="MF_00403"/>
    </source>
</evidence>
<evidence type="ECO:0000305" key="3"/>
<organism>
    <name type="scientific">Ehrlichia ruminantium (strain Gardel)</name>
    <dbReference type="NCBI Taxonomy" id="302409"/>
    <lineage>
        <taxon>Bacteria</taxon>
        <taxon>Pseudomonadati</taxon>
        <taxon>Pseudomonadota</taxon>
        <taxon>Alphaproteobacteria</taxon>
        <taxon>Rickettsiales</taxon>
        <taxon>Anaplasmataceae</taxon>
        <taxon>Ehrlichia</taxon>
    </lineage>
</organism>
<sequence>MPTINQLVRSPRKSRALLNKAPALQHNPQKRAVCVKVYTTTPRKPNSALRKVARVKIAGYGSEVIAYIPGEGHNLQEHSVVLIRGGRVKDLPGVRYHIIRGALDSRGVQNRKKARSKYGVKKS</sequence>
<comment type="function">
    <text evidence="2">With S4 and S5 plays an important role in translational accuracy.</text>
</comment>
<comment type="function">
    <text evidence="2">Interacts with and stabilizes bases of the 16S rRNA that are involved in tRNA selection in the A site and with the mRNA backbone. Located at the interface of the 30S and 50S subunits, it traverses the body of the 30S subunit contacting proteins on the other side and probably holding the rRNA structure together. The combined cluster of proteins S8, S12 and S17 appears to hold together the shoulder and platform of the 30S subunit.</text>
</comment>
<comment type="subunit">
    <text evidence="2">Part of the 30S ribosomal subunit. Contacts proteins S8 and S17. May interact with IF1 in the 30S initiation complex.</text>
</comment>
<comment type="similarity">
    <text evidence="2">Belongs to the universal ribosomal protein uS12 family.</text>
</comment>
<gene>
    <name evidence="2" type="primary">rpsL</name>
    <name type="ordered locus">ERGA_CDS_01550</name>
</gene>
<dbReference type="EMBL" id="CR925677">
    <property type="protein sequence ID" value="CAI27607.1"/>
    <property type="molecule type" value="Genomic_DNA"/>
</dbReference>
<dbReference type="RefSeq" id="WP_011154847.1">
    <property type="nucleotide sequence ID" value="NC_006831.1"/>
</dbReference>
<dbReference type="SMR" id="Q5FFE9"/>
<dbReference type="GeneID" id="33057617"/>
<dbReference type="KEGG" id="erg:ERGA_CDS_01550"/>
<dbReference type="HOGENOM" id="CLU_104295_1_2_5"/>
<dbReference type="OrthoDB" id="9802366at2"/>
<dbReference type="Proteomes" id="UP000000533">
    <property type="component" value="Chromosome"/>
</dbReference>
<dbReference type="GO" id="GO:0015935">
    <property type="term" value="C:small ribosomal subunit"/>
    <property type="evidence" value="ECO:0007669"/>
    <property type="project" value="InterPro"/>
</dbReference>
<dbReference type="GO" id="GO:0019843">
    <property type="term" value="F:rRNA binding"/>
    <property type="evidence" value="ECO:0007669"/>
    <property type="project" value="UniProtKB-UniRule"/>
</dbReference>
<dbReference type="GO" id="GO:0003735">
    <property type="term" value="F:structural constituent of ribosome"/>
    <property type="evidence" value="ECO:0007669"/>
    <property type="project" value="InterPro"/>
</dbReference>
<dbReference type="GO" id="GO:0000049">
    <property type="term" value="F:tRNA binding"/>
    <property type="evidence" value="ECO:0007669"/>
    <property type="project" value="UniProtKB-UniRule"/>
</dbReference>
<dbReference type="GO" id="GO:0006412">
    <property type="term" value="P:translation"/>
    <property type="evidence" value="ECO:0007669"/>
    <property type="project" value="UniProtKB-UniRule"/>
</dbReference>
<dbReference type="CDD" id="cd03368">
    <property type="entry name" value="Ribosomal_S12"/>
    <property type="match status" value="1"/>
</dbReference>
<dbReference type="FunFam" id="2.40.50.140:FF:000001">
    <property type="entry name" value="30S ribosomal protein S12"/>
    <property type="match status" value="1"/>
</dbReference>
<dbReference type="Gene3D" id="2.40.50.140">
    <property type="entry name" value="Nucleic acid-binding proteins"/>
    <property type="match status" value="1"/>
</dbReference>
<dbReference type="HAMAP" id="MF_00403_B">
    <property type="entry name" value="Ribosomal_uS12_B"/>
    <property type="match status" value="1"/>
</dbReference>
<dbReference type="InterPro" id="IPR012340">
    <property type="entry name" value="NA-bd_OB-fold"/>
</dbReference>
<dbReference type="InterPro" id="IPR006032">
    <property type="entry name" value="Ribosomal_uS12"/>
</dbReference>
<dbReference type="InterPro" id="IPR005679">
    <property type="entry name" value="Ribosomal_uS12_bac"/>
</dbReference>
<dbReference type="NCBIfam" id="TIGR00981">
    <property type="entry name" value="rpsL_bact"/>
    <property type="match status" value="1"/>
</dbReference>
<dbReference type="PANTHER" id="PTHR11652">
    <property type="entry name" value="30S RIBOSOMAL PROTEIN S12 FAMILY MEMBER"/>
    <property type="match status" value="1"/>
</dbReference>
<dbReference type="Pfam" id="PF00164">
    <property type="entry name" value="Ribosom_S12_S23"/>
    <property type="match status" value="1"/>
</dbReference>
<dbReference type="PIRSF" id="PIRSF002133">
    <property type="entry name" value="Ribosomal_S12/S23"/>
    <property type="match status" value="1"/>
</dbReference>
<dbReference type="PRINTS" id="PR01034">
    <property type="entry name" value="RIBOSOMALS12"/>
</dbReference>
<dbReference type="SUPFAM" id="SSF50249">
    <property type="entry name" value="Nucleic acid-binding proteins"/>
    <property type="match status" value="1"/>
</dbReference>
<dbReference type="PROSITE" id="PS00055">
    <property type="entry name" value="RIBOSOMAL_S12"/>
    <property type="match status" value="1"/>
</dbReference>
<name>RS12_EHRRG</name>
<feature type="chain" id="PRO_0000295974" description="Small ribosomal subunit protein uS12">
    <location>
        <begin position="1"/>
        <end position="123"/>
    </location>
</feature>
<feature type="modified residue" description="3-methylthioaspartic acid" evidence="1">
    <location>
        <position position="90"/>
    </location>
</feature>
<proteinExistence type="inferred from homology"/>
<reference key="1">
    <citation type="journal article" date="2006" name="J. Bacteriol.">
        <title>Comparative genomic analysis of three strains of Ehrlichia ruminantium reveals an active process of genome size plasticity.</title>
        <authorList>
            <person name="Frutos R."/>
            <person name="Viari A."/>
            <person name="Ferraz C."/>
            <person name="Morgat A."/>
            <person name="Eychenie S."/>
            <person name="Kandassamy Y."/>
            <person name="Chantal I."/>
            <person name="Bensaid A."/>
            <person name="Coissac E."/>
            <person name="Vachiery N."/>
            <person name="Demaille J."/>
            <person name="Martinez D."/>
        </authorList>
    </citation>
    <scope>NUCLEOTIDE SEQUENCE [LARGE SCALE GENOMIC DNA]</scope>
    <source>
        <strain>Gardel</strain>
    </source>
</reference>